<comment type="function">
    <text evidence="1">Catalyzes the transfer of the diacylglyceryl group from phosphatidylglycerol to the sulfhydryl group of the N-terminal cysteine of a prolipoprotein, the first step in the formation of mature lipoproteins.</text>
</comment>
<comment type="catalytic activity">
    <reaction evidence="1">
        <text>L-cysteinyl-[prolipoprotein] + a 1,2-diacyl-sn-glycero-3-phospho-(1'-sn-glycerol) = an S-1,2-diacyl-sn-glyceryl-L-cysteinyl-[prolipoprotein] + sn-glycerol 1-phosphate + H(+)</text>
        <dbReference type="Rhea" id="RHEA:56712"/>
        <dbReference type="Rhea" id="RHEA-COMP:14679"/>
        <dbReference type="Rhea" id="RHEA-COMP:14680"/>
        <dbReference type="ChEBI" id="CHEBI:15378"/>
        <dbReference type="ChEBI" id="CHEBI:29950"/>
        <dbReference type="ChEBI" id="CHEBI:57685"/>
        <dbReference type="ChEBI" id="CHEBI:64716"/>
        <dbReference type="ChEBI" id="CHEBI:140658"/>
        <dbReference type="EC" id="2.5.1.145"/>
    </reaction>
</comment>
<comment type="pathway">
    <text evidence="1">Protein modification; lipoprotein biosynthesis (diacylglyceryl transfer).</text>
</comment>
<comment type="subcellular location">
    <subcellularLocation>
        <location evidence="1">Cell inner membrane</location>
        <topology evidence="1">Multi-pass membrane protein</topology>
    </subcellularLocation>
</comment>
<comment type="similarity">
    <text evidence="1">Belongs to the Lgt family.</text>
</comment>
<proteinExistence type="inferred from homology"/>
<dbReference type="EC" id="2.5.1.145" evidence="1"/>
<dbReference type="EMBL" id="CP000285">
    <property type="protein sequence ID" value="ABE59920.1"/>
    <property type="molecule type" value="Genomic_DNA"/>
</dbReference>
<dbReference type="RefSeq" id="WP_011507866.1">
    <property type="nucleotide sequence ID" value="NC_007963.1"/>
</dbReference>
<dbReference type="SMR" id="Q1QUD8"/>
<dbReference type="STRING" id="290398.Csal_2573"/>
<dbReference type="GeneID" id="95335275"/>
<dbReference type="KEGG" id="csa:Csal_2573"/>
<dbReference type="eggNOG" id="COG0682">
    <property type="taxonomic scope" value="Bacteria"/>
</dbReference>
<dbReference type="HOGENOM" id="CLU_013386_1_0_6"/>
<dbReference type="OrthoDB" id="871140at2"/>
<dbReference type="UniPathway" id="UPA00664"/>
<dbReference type="Proteomes" id="UP000000239">
    <property type="component" value="Chromosome"/>
</dbReference>
<dbReference type="GO" id="GO:0005886">
    <property type="term" value="C:plasma membrane"/>
    <property type="evidence" value="ECO:0007669"/>
    <property type="project" value="UniProtKB-SubCell"/>
</dbReference>
<dbReference type="GO" id="GO:0008961">
    <property type="term" value="F:phosphatidylglycerol-prolipoprotein diacylglyceryl transferase activity"/>
    <property type="evidence" value="ECO:0007669"/>
    <property type="project" value="UniProtKB-UniRule"/>
</dbReference>
<dbReference type="GO" id="GO:0042158">
    <property type="term" value="P:lipoprotein biosynthetic process"/>
    <property type="evidence" value="ECO:0007669"/>
    <property type="project" value="UniProtKB-UniRule"/>
</dbReference>
<dbReference type="HAMAP" id="MF_01147">
    <property type="entry name" value="Lgt"/>
    <property type="match status" value="1"/>
</dbReference>
<dbReference type="InterPro" id="IPR001640">
    <property type="entry name" value="Lgt"/>
</dbReference>
<dbReference type="NCBIfam" id="TIGR00544">
    <property type="entry name" value="lgt"/>
    <property type="match status" value="1"/>
</dbReference>
<dbReference type="PANTHER" id="PTHR30589:SF0">
    <property type="entry name" value="PHOSPHATIDYLGLYCEROL--PROLIPOPROTEIN DIACYLGLYCERYL TRANSFERASE"/>
    <property type="match status" value="1"/>
</dbReference>
<dbReference type="PANTHER" id="PTHR30589">
    <property type="entry name" value="PROLIPOPROTEIN DIACYLGLYCERYL TRANSFERASE"/>
    <property type="match status" value="1"/>
</dbReference>
<dbReference type="Pfam" id="PF01790">
    <property type="entry name" value="LGT"/>
    <property type="match status" value="1"/>
</dbReference>
<dbReference type="PROSITE" id="PS01311">
    <property type="entry name" value="LGT"/>
    <property type="match status" value="1"/>
</dbReference>
<sequence>MLTYPDIDPVAIALGPFKVHWYGLMYVVGFVGAWWLGRRRADRLGVQPDAIGDLLFYGALGVVLGGRVGYALFYGFERLAADPLWIFQVWDGGMSFHGGLIGVLIAAWLFARKHRLAFFQLTDFVAPLVPLGLGAGRIGNFINHELPGRVTDVPWALVYPGLGPEGRHPSPLYEFALEGVVMFVVLWWVSSRPRRRGMISGLFLLLYAVFRFSVEFVRRPDPQLGFIAFDWLTMGQLLTVPMALAGIALCVWSRRQPVDDARMQAAT</sequence>
<organism>
    <name type="scientific">Chromohalobacter salexigens (strain ATCC BAA-138 / DSM 3043 / CIP 106854 / NCIMB 13768 / 1H11)</name>
    <dbReference type="NCBI Taxonomy" id="290398"/>
    <lineage>
        <taxon>Bacteria</taxon>
        <taxon>Pseudomonadati</taxon>
        <taxon>Pseudomonadota</taxon>
        <taxon>Gammaproteobacteria</taxon>
        <taxon>Oceanospirillales</taxon>
        <taxon>Halomonadaceae</taxon>
        <taxon>Chromohalobacter</taxon>
    </lineage>
</organism>
<protein>
    <recommendedName>
        <fullName evidence="1">Phosphatidylglycerol--prolipoprotein diacylglyceryl transferase</fullName>
        <ecNumber evidence="1">2.5.1.145</ecNumber>
    </recommendedName>
</protein>
<name>LGT_CHRSD</name>
<accession>Q1QUD8</accession>
<evidence type="ECO:0000255" key="1">
    <source>
        <dbReference type="HAMAP-Rule" id="MF_01147"/>
    </source>
</evidence>
<reference key="1">
    <citation type="journal article" date="2011" name="Stand. Genomic Sci.">
        <title>Complete genome sequence of the halophilic and highly halotolerant Chromohalobacter salexigens type strain (1H11(T)).</title>
        <authorList>
            <person name="Copeland A."/>
            <person name="O'Connor K."/>
            <person name="Lucas S."/>
            <person name="Lapidus A."/>
            <person name="Berry K.W."/>
            <person name="Detter J.C."/>
            <person name="Del Rio T.G."/>
            <person name="Hammon N."/>
            <person name="Dalin E."/>
            <person name="Tice H."/>
            <person name="Pitluck S."/>
            <person name="Bruce D."/>
            <person name="Goodwin L."/>
            <person name="Han C."/>
            <person name="Tapia R."/>
            <person name="Saunders E."/>
            <person name="Schmutz J."/>
            <person name="Brettin T."/>
            <person name="Larimer F."/>
            <person name="Land M."/>
            <person name="Hauser L."/>
            <person name="Vargas C."/>
            <person name="Nieto J.J."/>
            <person name="Kyrpides N.C."/>
            <person name="Ivanova N."/>
            <person name="Goker M."/>
            <person name="Klenk H.P."/>
            <person name="Csonka L.N."/>
            <person name="Woyke T."/>
        </authorList>
    </citation>
    <scope>NUCLEOTIDE SEQUENCE [LARGE SCALE GENOMIC DNA]</scope>
    <source>
        <strain>ATCC BAA-138 / DSM 3043 / CIP 106854 / NCIMB 13768 / 1H11</strain>
    </source>
</reference>
<keyword id="KW-0997">Cell inner membrane</keyword>
<keyword id="KW-1003">Cell membrane</keyword>
<keyword id="KW-0472">Membrane</keyword>
<keyword id="KW-1185">Reference proteome</keyword>
<keyword id="KW-0808">Transferase</keyword>
<keyword id="KW-0812">Transmembrane</keyword>
<keyword id="KW-1133">Transmembrane helix</keyword>
<feature type="chain" id="PRO_1000053413" description="Phosphatidylglycerol--prolipoprotein diacylglyceryl transferase">
    <location>
        <begin position="1"/>
        <end position="267"/>
    </location>
</feature>
<feature type="transmembrane region" description="Helical" evidence="1">
    <location>
        <begin position="10"/>
        <end position="30"/>
    </location>
</feature>
<feature type="transmembrane region" description="Helical" evidence="1">
    <location>
        <begin position="54"/>
        <end position="74"/>
    </location>
</feature>
<feature type="transmembrane region" description="Helical" evidence="1">
    <location>
        <begin position="90"/>
        <end position="110"/>
    </location>
</feature>
<feature type="transmembrane region" description="Helical" evidence="1">
    <location>
        <begin position="116"/>
        <end position="136"/>
    </location>
</feature>
<feature type="transmembrane region" description="Helical" evidence="1">
    <location>
        <begin position="169"/>
        <end position="189"/>
    </location>
</feature>
<feature type="transmembrane region" description="Helical" evidence="1">
    <location>
        <begin position="197"/>
        <end position="217"/>
    </location>
</feature>
<feature type="transmembrane region" description="Helical" evidence="1">
    <location>
        <begin position="231"/>
        <end position="251"/>
    </location>
</feature>
<feature type="binding site" evidence="1">
    <location>
        <position position="137"/>
    </location>
    <ligand>
        <name>a 1,2-diacyl-sn-glycero-3-phospho-(1'-sn-glycerol)</name>
        <dbReference type="ChEBI" id="CHEBI:64716"/>
    </ligand>
</feature>
<gene>
    <name evidence="1" type="primary">lgt</name>
    <name type="ordered locus">Csal_2573</name>
</gene>